<gene>
    <name evidence="1" type="primary">patA</name>
    <name type="ordered locus">MT2686</name>
</gene>
<reference key="1">
    <citation type="journal article" date="2002" name="J. Bacteriol.">
        <title>Whole-genome comparison of Mycobacterium tuberculosis clinical and laboratory strains.</title>
        <authorList>
            <person name="Fleischmann R.D."/>
            <person name="Alland D."/>
            <person name="Eisen J.A."/>
            <person name="Carpenter L."/>
            <person name="White O."/>
            <person name="Peterson J.D."/>
            <person name="DeBoy R.T."/>
            <person name="Dodson R.J."/>
            <person name="Gwinn M.L."/>
            <person name="Haft D.H."/>
            <person name="Hickey E.K."/>
            <person name="Kolonay J.F."/>
            <person name="Nelson W.C."/>
            <person name="Umayam L.A."/>
            <person name="Ermolaeva M.D."/>
            <person name="Salzberg S.L."/>
            <person name="Delcher A."/>
            <person name="Utterback T.R."/>
            <person name="Weidman J.F."/>
            <person name="Khouri H.M."/>
            <person name="Gill J."/>
            <person name="Mikula A."/>
            <person name="Bishai W."/>
            <person name="Jacobs W.R. Jr."/>
            <person name="Venter J.C."/>
            <person name="Fraser C.M."/>
        </authorList>
    </citation>
    <scope>NUCLEOTIDE SEQUENCE [LARGE SCALE GENOMIC DNA]</scope>
    <source>
        <strain>CDC 1551 / Oshkosh</strain>
    </source>
</reference>
<protein>
    <recommendedName>
        <fullName>Phosphatidylinositol mannoside acyltransferase</fullName>
        <shortName>PIM acyltransferase</shortName>
        <ecNumber evidence="1">2.3.1.265</ecNumber>
    </recommendedName>
</protein>
<feature type="chain" id="PRO_0000427333" description="Phosphatidylinositol mannoside acyltransferase">
    <location>
        <begin position="1"/>
        <end position="316"/>
    </location>
</feature>
<feature type="active site" description="Proton acceptor" evidence="1">
    <location>
        <position position="137"/>
    </location>
</feature>
<feature type="active site" evidence="1">
    <location>
        <position position="211"/>
    </location>
</feature>
<feature type="binding site" evidence="1">
    <location>
        <position position="137"/>
    </location>
    <ligand>
        <name>hexadecanoyl-CoA</name>
        <dbReference type="ChEBI" id="CHEBI:57379"/>
    </ligand>
</feature>
<feature type="binding site" evidence="1">
    <location>
        <position position="175"/>
    </location>
    <ligand>
        <name>hexadecanoyl-CoA</name>
        <dbReference type="ChEBI" id="CHEBI:57379"/>
    </ligand>
</feature>
<feature type="binding site" evidence="1">
    <location>
        <position position="240"/>
    </location>
    <ligand>
        <name>hexadecanoyl-CoA</name>
        <dbReference type="ChEBI" id="CHEBI:57379"/>
    </ligand>
</feature>
<dbReference type="EC" id="2.3.1.265" evidence="1"/>
<dbReference type="EMBL" id="AE000516">
    <property type="protein sequence ID" value="AAK47002.1"/>
    <property type="molecule type" value="Genomic_DNA"/>
</dbReference>
<dbReference type="PIR" id="B70571">
    <property type="entry name" value="B70571"/>
</dbReference>
<dbReference type="RefSeq" id="WP_003900533.1">
    <property type="nucleotide sequence ID" value="NZ_KK341227.1"/>
</dbReference>
<dbReference type="SMR" id="P9WMB4"/>
<dbReference type="KEGG" id="mtc:MT2686"/>
<dbReference type="PATRIC" id="fig|83331.31.peg.2896"/>
<dbReference type="HOGENOM" id="CLU_049421_3_0_11"/>
<dbReference type="UniPathway" id="UPA00949"/>
<dbReference type="Proteomes" id="UP000001020">
    <property type="component" value="Chromosome"/>
</dbReference>
<dbReference type="GO" id="GO:0005886">
    <property type="term" value="C:plasma membrane"/>
    <property type="evidence" value="ECO:0007669"/>
    <property type="project" value="UniProtKB-SubCell"/>
</dbReference>
<dbReference type="GO" id="GO:0016746">
    <property type="term" value="F:acyltransferase activity"/>
    <property type="evidence" value="ECO:0007669"/>
    <property type="project" value="UniProtKB-KW"/>
</dbReference>
<dbReference type="GO" id="GO:0009247">
    <property type="term" value="P:glycolipid biosynthetic process"/>
    <property type="evidence" value="ECO:0007669"/>
    <property type="project" value="UniProtKB-ARBA"/>
</dbReference>
<dbReference type="GO" id="GO:0046488">
    <property type="term" value="P:phosphatidylinositol metabolic process"/>
    <property type="evidence" value="ECO:0007669"/>
    <property type="project" value="UniProtKB-UniPathway"/>
</dbReference>
<dbReference type="GO" id="GO:0008654">
    <property type="term" value="P:phospholipid biosynthetic process"/>
    <property type="evidence" value="ECO:0007669"/>
    <property type="project" value="UniProtKB-KW"/>
</dbReference>
<dbReference type="CDD" id="cd07984">
    <property type="entry name" value="LPLAT_LABLAT-like"/>
    <property type="match status" value="1"/>
</dbReference>
<dbReference type="InterPro" id="IPR004960">
    <property type="entry name" value="LipA_acyltrans"/>
</dbReference>
<dbReference type="NCBIfam" id="NF005919">
    <property type="entry name" value="PRK07920.1"/>
    <property type="match status" value="1"/>
</dbReference>
<dbReference type="PANTHER" id="PTHR30606">
    <property type="entry name" value="LIPID A BIOSYNTHESIS LAUROYL ACYLTRANSFERASE"/>
    <property type="match status" value="1"/>
</dbReference>
<dbReference type="PANTHER" id="PTHR30606:SF10">
    <property type="entry name" value="PHOSPHATIDYLINOSITOL MANNOSIDE ACYLTRANSFERASE"/>
    <property type="match status" value="1"/>
</dbReference>
<dbReference type="Pfam" id="PF03279">
    <property type="entry name" value="Lip_A_acyltrans"/>
    <property type="match status" value="1"/>
</dbReference>
<sequence length="316" mass="35160">MIAGLKGLKLPKDPRSSVTRTATDWAYAAGWMAVRALPEFAVRNAFDTGARYFARHGGPEQLRKNLARVLGVPPAAVPDPLMCASLESYGRYWREVFRLPTMNHRKLARQLDRVIGGLDHLDAALAAGLGAVLALPHSGNWDMAGMWLVQRHGTFTTVAERLKPESLYQRFIDYRESLGFEVLPLSGGERPPFEVLCERLRNNRVVCLMAERDLTRTGVEVDFFGEPTRMPVGPAKLAVETGAALLPTHCWFEGRGWGFQVYPALDCTSGDVAAITQALADRFAQNIAAHPADWHMLQPQWLADLSESRRAQLRSR</sequence>
<name>ACYLT_MYCTO</name>
<evidence type="ECO:0000250" key="1">
    <source>
        <dbReference type="UniProtKB" id="A0QWG5"/>
    </source>
</evidence>
<evidence type="ECO:0000305" key="2"/>
<accession>P9WMB4</accession>
<accession>L0TCW4</accession>
<accession>O06203</accession>
<accession>Q7D6W7</accession>
<comment type="function">
    <text evidence="1">Catalyzes the transfer of a palmitoyl moiety from palmitoyl-CoA to the 6-position of the mannose ring linked to the 2-position of myo-inositol in phosphatidyl-myo-inositol monomannoside (PIM1) or dimannoside (PIM2).</text>
</comment>
<comment type="catalytic activity">
    <reaction evidence="1">
        <text>a 2,6-O-bis(alpha-D-mannopyranosyl)-1-phosphatidyl-1D-myo-inositol + an acyl-CoA = a 2-O-(alpha-D-mannosyl)-6-O-(6-O-acyl-alpha-D-mannosyl)-1-phosphatidyl-1D-myo-inositol + CoA</text>
        <dbReference type="Rhea" id="RHEA:52436"/>
        <dbReference type="ChEBI" id="CHEBI:57287"/>
        <dbReference type="ChEBI" id="CHEBI:58342"/>
        <dbReference type="ChEBI" id="CHEBI:136624"/>
        <dbReference type="ChEBI" id="CHEBI:136625"/>
        <dbReference type="EC" id="2.3.1.265"/>
    </reaction>
</comment>
<comment type="catalytic activity">
    <reaction evidence="1">
        <text>a 1,2-diacyl-sn-glycero-3-phospho-[alpha-D-mannopyranosyl-(1&lt;-&gt;6)-D-myo-inositol] + an acyl-CoA = a 1,2-diacyl-sn-glycero-3-phospho-[alpha-D-6-acyl-mannopyranosyl-(1&lt;-&gt;6)-D-myo-inositol] + CoA</text>
        <dbReference type="Rhea" id="RHEA:47412"/>
        <dbReference type="ChEBI" id="CHEBI:57287"/>
        <dbReference type="ChEBI" id="CHEBI:58342"/>
        <dbReference type="ChEBI" id="CHEBI:87673"/>
        <dbReference type="ChEBI" id="CHEBI:88053"/>
        <dbReference type="EC" id="2.3.1.265"/>
    </reaction>
</comment>
<comment type="pathway">
    <text evidence="1">Phospholipid metabolism; phosphatidylinositol metabolism.</text>
</comment>
<comment type="subcellular location">
    <subcellularLocation>
        <location evidence="1">Cell inner membrane</location>
        <topology evidence="1">Peripheral membrane protein</topology>
        <orientation evidence="1">Cytoplasmic side</orientation>
    </subcellularLocation>
    <text evidence="1">Permanently associated with the membrane.</text>
</comment>
<comment type="similarity">
    <text evidence="2">Belongs to the LpxL/LpxM/LpxP family.</text>
</comment>
<proteinExistence type="inferred from homology"/>
<organism>
    <name type="scientific">Mycobacterium tuberculosis (strain CDC 1551 / Oshkosh)</name>
    <dbReference type="NCBI Taxonomy" id="83331"/>
    <lineage>
        <taxon>Bacteria</taxon>
        <taxon>Bacillati</taxon>
        <taxon>Actinomycetota</taxon>
        <taxon>Actinomycetes</taxon>
        <taxon>Mycobacteriales</taxon>
        <taxon>Mycobacteriaceae</taxon>
        <taxon>Mycobacterium</taxon>
        <taxon>Mycobacterium tuberculosis complex</taxon>
    </lineage>
</organism>
<keyword id="KW-0012">Acyltransferase</keyword>
<keyword id="KW-0997">Cell inner membrane</keyword>
<keyword id="KW-1003">Cell membrane</keyword>
<keyword id="KW-0444">Lipid biosynthesis</keyword>
<keyword id="KW-0443">Lipid metabolism</keyword>
<keyword id="KW-0472">Membrane</keyword>
<keyword id="KW-0594">Phospholipid biosynthesis</keyword>
<keyword id="KW-1208">Phospholipid metabolism</keyword>
<keyword id="KW-1185">Reference proteome</keyword>
<keyword id="KW-0808">Transferase</keyword>